<feature type="signal peptide" evidence="2">
    <location>
        <begin position="1"/>
        <end position="27"/>
    </location>
</feature>
<feature type="chain" id="PRO_0000441232" description="Glutelin type-D 1 acidic chain">
    <location>
        <begin position="28"/>
        <end position="285"/>
    </location>
</feature>
<feature type="chain" id="PRO_0000441233" description="Glutelin type-D 1 basic chain">
    <location>
        <begin position="286"/>
        <end position="484"/>
    </location>
</feature>
<feature type="domain" description="Cupin type-1 1" evidence="2">
    <location>
        <begin position="43"/>
        <end position="238"/>
    </location>
</feature>
<feature type="domain" description="Cupin type-1 2" evidence="2">
    <location>
        <begin position="298"/>
        <end position="447"/>
    </location>
</feature>
<feature type="disulfide bond" evidence="1">
    <location>
        <begin position="38"/>
        <end position="71"/>
    </location>
</feature>
<feature type="disulfide bond" description="Interchain (between acidic and basic chains)" evidence="1">
    <location>
        <begin position="114"/>
        <end position="292"/>
    </location>
</feature>
<feature type="sequence conflict" description="In Ref. 1; AAR06951." evidence="5" ref="1">
    <original>K</original>
    <variation>R</variation>
    <location>
        <position position="323"/>
    </location>
</feature>
<evidence type="ECO:0000250" key="1">
    <source>
        <dbReference type="UniProtKB" id="P04776"/>
    </source>
</evidence>
<evidence type="ECO:0000255" key="2"/>
<evidence type="ECO:0000269" key="3">
    <source>
    </source>
</evidence>
<evidence type="ECO:0000303" key="4">
    <source>
    </source>
</evidence>
<evidence type="ECO:0000305" key="5"/>
<evidence type="ECO:0000312" key="6">
    <source>
        <dbReference type="EMBL" id="BAD19796.1"/>
    </source>
</evidence>
<evidence type="ECO:0000312" key="7">
    <source>
        <dbReference type="EMBL" id="BAF08349.1"/>
    </source>
</evidence>
<evidence type="ECO:0000312" key="8">
    <source>
        <dbReference type="EMBL" id="EAZ22417.1"/>
    </source>
</evidence>
<organism>
    <name type="scientific">Oryza sativa subsp. japonica</name>
    <name type="common">Rice</name>
    <dbReference type="NCBI Taxonomy" id="39947"/>
    <lineage>
        <taxon>Eukaryota</taxon>
        <taxon>Viridiplantae</taxon>
        <taxon>Streptophyta</taxon>
        <taxon>Embryophyta</taxon>
        <taxon>Tracheophyta</taxon>
        <taxon>Spermatophyta</taxon>
        <taxon>Magnoliopsida</taxon>
        <taxon>Liliopsida</taxon>
        <taxon>Poales</taxon>
        <taxon>Poaceae</taxon>
        <taxon>BOP clade</taxon>
        <taxon>Oryzoideae</taxon>
        <taxon>Oryzeae</taxon>
        <taxon>Oryzinae</taxon>
        <taxon>Oryza</taxon>
        <taxon>Oryza sativa</taxon>
    </lineage>
</organism>
<protein>
    <recommendedName>
        <fullName evidence="5">Glutelin type-D 1</fullName>
    </recommendedName>
    <component>
        <recommendedName>
            <fullName evidence="5">Glutelin type-D 1 acidic chain</fullName>
        </recommendedName>
    </component>
    <component>
        <recommendedName>
            <fullName evidence="5">Glutelin type-D 1 basic chain</fullName>
        </recommendedName>
    </component>
</protein>
<proteinExistence type="evidence at transcript level"/>
<reference key="1">
    <citation type="submission" date="2003-10" db="EMBL/GenBank/DDBJ databases">
        <title>A novel Oryza sativa (japonica cultivar-group) glutelin gene.</title>
        <authorList>
            <person name="Wan J.M."/>
            <person name="Niu H.B."/>
            <person name="Zhai H.Q."/>
            <person name="Wang C.M."/>
            <person name="Jiang L."/>
        </authorList>
    </citation>
    <scope>NUCLEOTIDE SEQUENCE [MRNA]</scope>
</reference>
<reference key="2">
    <citation type="submission" date="2006-11" db="EMBL/GenBank/DDBJ databases">
        <title>Molecular cloning of glutelin genes in rice seeds.</title>
        <authorList>
            <person name="Yoon U.H."/>
            <person name="Kim Y.H."/>
        </authorList>
    </citation>
    <scope>NUCLEOTIDE SEQUENCE [MRNA]</scope>
</reference>
<reference key="3">
    <citation type="journal article" date="2005" name="Nature">
        <title>The map-based sequence of the rice genome.</title>
        <authorList>
            <consortium name="International rice genome sequencing project (IRGSP)"/>
        </authorList>
    </citation>
    <scope>NUCLEOTIDE SEQUENCE [LARGE SCALE GENOMIC DNA]</scope>
    <source>
        <strain>cv. Nipponbare</strain>
    </source>
</reference>
<reference key="4">
    <citation type="journal article" date="2008" name="Nucleic Acids Res.">
        <title>The rice annotation project database (RAP-DB): 2008 update.</title>
        <authorList>
            <consortium name="The rice annotation project (RAP)"/>
        </authorList>
    </citation>
    <scope>GENOME REANNOTATION</scope>
    <source>
        <strain>cv. Nipponbare</strain>
    </source>
</reference>
<reference key="5">
    <citation type="journal article" date="2013" name="Rice">
        <title>Improvement of the Oryza sativa Nipponbare reference genome using next generation sequence and optical map data.</title>
        <authorList>
            <person name="Kawahara Y."/>
            <person name="de la Bastide M."/>
            <person name="Hamilton J.P."/>
            <person name="Kanamori H."/>
            <person name="McCombie W.R."/>
            <person name="Ouyang S."/>
            <person name="Schwartz D.C."/>
            <person name="Tanaka T."/>
            <person name="Wu J."/>
            <person name="Zhou S."/>
            <person name="Childs K.L."/>
            <person name="Davidson R.M."/>
            <person name="Lin H."/>
            <person name="Quesada-Ocampo L."/>
            <person name="Vaillancourt B."/>
            <person name="Sakai H."/>
            <person name="Lee S.S."/>
            <person name="Kim J."/>
            <person name="Numa H."/>
            <person name="Itoh T."/>
            <person name="Buell C.R."/>
            <person name="Matsumoto T."/>
        </authorList>
    </citation>
    <scope>GENOME REANNOTATION</scope>
    <source>
        <strain>cv. Nipponbare</strain>
    </source>
</reference>
<reference key="6">
    <citation type="journal article" date="2013" name="Appl. Biochem. Biotechnol.">
        <title>Characterization of a novel glutelin subunit OsGluBX by the experimental approach and molecular dynamics simulations.</title>
        <authorList>
            <person name="He Y."/>
            <person name="Zhang Y."/>
            <person name="Wang S."/>
            <person name="Zeng H."/>
            <person name="Ding Y."/>
        </authorList>
    </citation>
    <scope>NUCLEOTIDE SEQUENCE [MRNA] OF 11-478</scope>
</reference>
<reference key="7">
    <citation type="journal article" date="2008" name="J. Exp. Bot.">
        <title>Characterization of a new rice glutelin gene GluD-1 expressed in the starchy endosperm.</title>
        <authorList>
            <person name="Kawakatsu T."/>
            <person name="Yamamoto M.P."/>
            <person name="Hirose S."/>
            <person name="Yano M."/>
            <person name="Takaiwa F."/>
        </authorList>
    </citation>
    <scope>FUNCTION</scope>
    <scope>SUBCELLULAR LOCATION</scope>
    <scope>DEVELOPMENTAL STAGE</scope>
</reference>
<name>GLUD1_ORYSJ</name>
<sequence>MATTTSLLSSCLCALLLAPLFSQGVDAWESRQGASRQCRFDRLQAFEPLRKVRSEAGDTEYFDERNEQFRCAGVFVIRRVIEPQGLVVPRYSNTPALAYIIQGKGYVGLTFPGCPATHQQQFQLFEQRQSDQAHKFRDEHQKIHEFRQGDVVALPASVAHWFYNGGDTPAVVVYVYDIKSFANQLEPRQKEFLLAGNNQRGQQIFEHSIFQHSGQNIFSGFNTEVLSEALGINTEASKRLQSQNDQRGDIIRVKHGLQLLKPTLTQRQEEHRQYQQVQYREGQYNGLDENFCTIKARVNIENPSRADYYNPRAGRITLLNNQKFPILNLIGMGAARVNLYQNALLSPFWNINAHSVVYIIQGSVRVQVANNQGRSVFNGVLHQGQLLIIPQNHAVIKKAEHNGCQYVAIKTISDPTVSWVAGKNSILRALPVDVIANAYRISRDEARRLKNNRADEIGPFTPRFPQKSQRGYQFLTEGLSLIGM</sequence>
<comment type="function">
    <text evidence="3">Seed storage protein.</text>
</comment>
<comment type="subunit">
    <text evidence="1">Hexamer; each subunit is composed of an acidic and a basic chain derived from a single precursor and linked by a disulfide bond.</text>
</comment>
<comment type="subcellular location">
    <subcellularLocation>
        <location evidence="3">Protein storage vacuole</location>
    </subcellularLocation>
</comment>
<comment type="developmental stage">
    <text>Specifically expressed in starchy endosperm of developing seeds from 5 to 30 days after flowering (DAF).</text>
</comment>
<comment type="similarity">
    <text evidence="5">Belongs to the 11S seed storage protein (globulins) family.</text>
</comment>
<gene>
    <name evidence="5" type="primary">GLUD1</name>
    <name evidence="4" type="synonym">GLUD-1</name>
    <name evidence="7" type="ordered locus">Os02g0249000</name>
    <name evidence="5" type="ordered locus">LOC_Os02g15090</name>
    <name evidence="8" type="ORF">OsJ_06077</name>
    <name evidence="6" type="ORF">OSJNBa0011N12.22</name>
</gene>
<dbReference type="EMBL" id="AY429650">
    <property type="protein sequence ID" value="AAR06951.1"/>
    <property type="molecule type" value="mRNA"/>
</dbReference>
<dbReference type="EMBL" id="EF122464">
    <property type="protein sequence ID" value="ABL74551.1"/>
    <property type="molecule type" value="mRNA"/>
</dbReference>
<dbReference type="EMBL" id="AP005511">
    <property type="protein sequence ID" value="BAD19796.1"/>
    <property type="molecule type" value="Genomic_DNA"/>
</dbReference>
<dbReference type="EMBL" id="AP008208">
    <property type="protein sequence ID" value="BAF08349.1"/>
    <property type="molecule type" value="Genomic_DNA"/>
</dbReference>
<dbReference type="EMBL" id="AP014958">
    <property type="protein sequence ID" value="BAS77897.1"/>
    <property type="molecule type" value="Genomic_DNA"/>
</dbReference>
<dbReference type="EMBL" id="CM000139">
    <property type="protein sequence ID" value="EAZ22417.1"/>
    <property type="molecule type" value="Genomic_DNA"/>
</dbReference>
<dbReference type="EMBL" id="JQ694716">
    <property type="protein sequence ID" value="AFZ41190.1"/>
    <property type="molecule type" value="mRNA"/>
</dbReference>
<dbReference type="RefSeq" id="XP_015627130.1">
    <property type="nucleotide sequence ID" value="XM_015771644.1"/>
</dbReference>
<dbReference type="SMR" id="Q6K508"/>
<dbReference type="FunCoup" id="Q6K508">
    <property type="interactions" value="2006"/>
</dbReference>
<dbReference type="STRING" id="39947.Q6K508"/>
<dbReference type="PaxDb" id="39947-Q6K508"/>
<dbReference type="EnsemblPlants" id="Os02t0249000-01">
    <property type="protein sequence ID" value="Os02t0249000-01"/>
    <property type="gene ID" value="Os02g0249000"/>
</dbReference>
<dbReference type="Gramene" id="Os02t0249000-01">
    <property type="protein sequence ID" value="Os02t0249000-01"/>
    <property type="gene ID" value="Os02g0249000"/>
</dbReference>
<dbReference type="KEGG" id="dosa:Os02g0249000"/>
<dbReference type="eggNOG" id="ENOG502QU1J">
    <property type="taxonomic scope" value="Eukaryota"/>
</dbReference>
<dbReference type="HOGENOM" id="CLU_026341_2_0_1"/>
<dbReference type="InParanoid" id="Q6K508"/>
<dbReference type="OMA" id="ICTMEVR"/>
<dbReference type="OrthoDB" id="2016041at2759"/>
<dbReference type="Proteomes" id="UP000000763">
    <property type="component" value="Chromosome 2"/>
</dbReference>
<dbReference type="Proteomes" id="UP000007752">
    <property type="component" value="Chromosome 2"/>
</dbReference>
<dbReference type="Proteomes" id="UP000059680">
    <property type="component" value="Chromosome 2"/>
</dbReference>
<dbReference type="GO" id="GO:0000326">
    <property type="term" value="C:protein storage vacuole"/>
    <property type="evidence" value="ECO:0007669"/>
    <property type="project" value="UniProtKB-SubCell"/>
</dbReference>
<dbReference type="GO" id="GO:0045735">
    <property type="term" value="F:nutrient reservoir activity"/>
    <property type="evidence" value="ECO:0007669"/>
    <property type="project" value="UniProtKB-KW"/>
</dbReference>
<dbReference type="GO" id="GO:0048316">
    <property type="term" value="P:seed development"/>
    <property type="evidence" value="ECO:0007669"/>
    <property type="project" value="UniProtKB-ARBA"/>
</dbReference>
<dbReference type="CDD" id="cd02243">
    <property type="entry name" value="cupin_11S_legumin_C"/>
    <property type="match status" value="1"/>
</dbReference>
<dbReference type="CDD" id="cd02242">
    <property type="entry name" value="cupin_11S_legumin_N"/>
    <property type="match status" value="1"/>
</dbReference>
<dbReference type="FunFam" id="2.60.120.10:FF:000073">
    <property type="entry name" value="Glycinin G1"/>
    <property type="match status" value="1"/>
</dbReference>
<dbReference type="Gene3D" id="2.60.120.10">
    <property type="entry name" value="Jelly Rolls"/>
    <property type="match status" value="2"/>
</dbReference>
<dbReference type="InterPro" id="IPR022379">
    <property type="entry name" value="11S_seedstore_CS"/>
</dbReference>
<dbReference type="InterPro" id="IPR006044">
    <property type="entry name" value="11S_seedstore_pln"/>
</dbReference>
<dbReference type="InterPro" id="IPR006045">
    <property type="entry name" value="Cupin_1"/>
</dbReference>
<dbReference type="InterPro" id="IPR014710">
    <property type="entry name" value="RmlC-like_jellyroll"/>
</dbReference>
<dbReference type="InterPro" id="IPR011051">
    <property type="entry name" value="RmlC_Cupin_sf"/>
</dbReference>
<dbReference type="InterPro" id="IPR050253">
    <property type="entry name" value="Seed_Storage-Functional"/>
</dbReference>
<dbReference type="PANTHER" id="PTHR31189:SF35">
    <property type="entry name" value="12S SEED STORAGE PROTEIN CRB"/>
    <property type="match status" value="1"/>
</dbReference>
<dbReference type="PANTHER" id="PTHR31189">
    <property type="entry name" value="OS03G0336100 PROTEIN-RELATED"/>
    <property type="match status" value="1"/>
</dbReference>
<dbReference type="Pfam" id="PF00190">
    <property type="entry name" value="Cupin_1"/>
    <property type="match status" value="2"/>
</dbReference>
<dbReference type="PRINTS" id="PR00439">
    <property type="entry name" value="11SGLOBULIN"/>
</dbReference>
<dbReference type="SMART" id="SM00835">
    <property type="entry name" value="Cupin_1"/>
    <property type="match status" value="2"/>
</dbReference>
<dbReference type="SUPFAM" id="SSF51182">
    <property type="entry name" value="RmlC-like cupins"/>
    <property type="match status" value="1"/>
</dbReference>
<dbReference type="PROSITE" id="PS00305">
    <property type="entry name" value="11S_SEED_STORAGE"/>
    <property type="match status" value="1"/>
</dbReference>
<accession>Q6K508</accession>
<accession>M1G5N9</accession>
<accession>Q6T726</accession>
<keyword id="KW-1015">Disulfide bond</keyword>
<keyword id="KW-1185">Reference proteome</keyword>
<keyword id="KW-0708">Seed storage protein</keyword>
<keyword id="KW-0732">Signal</keyword>
<keyword id="KW-0758">Storage protein</keyword>
<keyword id="KW-0926">Vacuole</keyword>